<gene>
    <name type="primary">OPG060</name>
    <name type="ORF">F2</name>
</gene>
<dbReference type="EMBL" id="M57977">
    <property type="protein sequence ID" value="AAA48281.1"/>
    <property type="status" value="ALT_INIT"/>
    <property type="molecule type" value="Genomic_DNA"/>
</dbReference>
<dbReference type="InterPro" id="IPR007675">
    <property type="entry name" value="Poxvirus_F15"/>
</dbReference>
<dbReference type="Pfam" id="PF04596">
    <property type="entry name" value="Pox_F15"/>
    <property type="match status" value="1"/>
</dbReference>
<dbReference type="PIRSF" id="PIRSF015694">
    <property type="entry name" value="VAC_F15L"/>
    <property type="match status" value="1"/>
</dbReference>
<proteinExistence type="inferred from homology"/>
<name>PG060_VACCP</name>
<sequence length="158" mass="18620">MRSIAGLHKLKMEIFNVEELINMKPFKNMNKITINQKDNCILAYRCFVKIDTPRYIPSTSISSSNIIRIRNHDFTLSELLYSPFHFQQPQFQYLLPGFVLTCIDKVSKQQKECKYCISNRGDDDSLSINLFIPTINKSIYIIIGLRMKNFWKPKFEIE</sequence>
<keyword id="KW-0244">Early protein</keyword>
<organismHost>
    <name type="scientific">Homo sapiens</name>
    <name type="common">Human</name>
    <dbReference type="NCBI Taxonomy" id="9606"/>
</organismHost>
<evidence type="ECO:0000250" key="1">
    <source>
        <dbReference type="UniProtKB" id="Q80HX4"/>
    </source>
</evidence>
<evidence type="ECO:0000305" key="2"/>
<reference key="1">
    <citation type="journal article" date="1988" name="Biotekhnologiya">
        <title>Structural-functional organization of segment of vaccinia virus genome.</title>
        <authorList>
            <person name="Mikryukov N.N."/>
            <person name="Chizhikov V.E."/>
            <person name="Prikhod'Ko G.G."/>
            <person name="Urmmanov I.M."/>
            <person name="Serpinskii O.I."/>
            <person name="Blinov V.M."/>
            <person name="Nikulin A.E."/>
            <person name="Vasilenko S.K."/>
        </authorList>
    </citation>
    <scope>NUCLEOTIDE SEQUENCE [GENOMIC DNA]</scope>
</reference>
<protein>
    <recommendedName>
        <fullName>Protein OPG060</fullName>
    </recommendedName>
    <alternativeName>
        <fullName>Protein F15</fullName>
    </alternativeName>
    <alternativeName>
        <fullName>Protein F2</fullName>
    </alternativeName>
</protein>
<accession>P29891</accession>
<comment type="induction">
    <text evidence="1">Expressed in the early phase of the viral replicative cycle.</text>
</comment>
<comment type="similarity">
    <text evidence="2">Belongs to the orthopoxvirus OPG058 family.</text>
</comment>
<comment type="sequence caution" evidence="2">
    <conflict type="erroneous initiation">
        <sequence resource="EMBL-CDS" id="AAA48281"/>
    </conflict>
    <text>Truncated N-terminus.</text>
</comment>
<organism>
    <name type="scientific">Vaccinia virus (strain L-IVP)</name>
    <name type="common">VACV</name>
    <dbReference type="NCBI Taxonomy" id="31531"/>
    <lineage>
        <taxon>Viruses</taxon>
        <taxon>Varidnaviria</taxon>
        <taxon>Bamfordvirae</taxon>
        <taxon>Nucleocytoviricota</taxon>
        <taxon>Pokkesviricetes</taxon>
        <taxon>Chitovirales</taxon>
        <taxon>Poxviridae</taxon>
        <taxon>Chordopoxvirinae</taxon>
        <taxon>Orthopoxvirus</taxon>
        <taxon>Vaccinia virus</taxon>
    </lineage>
</organism>
<feature type="chain" id="PRO_0000099512" description="Protein OPG060">
    <location>
        <begin position="1"/>
        <end position="158"/>
    </location>
</feature>